<name>MIAA1_SYNAS</name>
<accession>Q2LTI8</accession>
<organism>
    <name type="scientific">Syntrophus aciditrophicus (strain SB)</name>
    <dbReference type="NCBI Taxonomy" id="56780"/>
    <lineage>
        <taxon>Bacteria</taxon>
        <taxon>Pseudomonadati</taxon>
        <taxon>Thermodesulfobacteriota</taxon>
        <taxon>Syntrophia</taxon>
        <taxon>Syntrophales</taxon>
        <taxon>Syntrophaceae</taxon>
        <taxon>Syntrophus</taxon>
    </lineage>
</organism>
<reference key="1">
    <citation type="journal article" date="2007" name="Proc. Natl. Acad. Sci. U.S.A.">
        <title>The genome of Syntrophus aciditrophicus: life at the thermodynamic limit of microbial growth.</title>
        <authorList>
            <person name="McInerney M.J."/>
            <person name="Rohlin L."/>
            <person name="Mouttaki H."/>
            <person name="Kim U."/>
            <person name="Krupp R.S."/>
            <person name="Rios-Hernandez L."/>
            <person name="Sieber J."/>
            <person name="Struchtemeyer C.G."/>
            <person name="Bhattacharyya A."/>
            <person name="Campbell J.W."/>
            <person name="Gunsalus R.P."/>
        </authorList>
    </citation>
    <scope>NUCLEOTIDE SEQUENCE [LARGE SCALE GENOMIC DNA]</scope>
    <source>
        <strain>SB</strain>
    </source>
</reference>
<dbReference type="EC" id="2.5.1.75" evidence="1"/>
<dbReference type="EMBL" id="CP000252">
    <property type="protein sequence ID" value="ABC77399.1"/>
    <property type="molecule type" value="Genomic_DNA"/>
</dbReference>
<dbReference type="RefSeq" id="WP_011417421.1">
    <property type="nucleotide sequence ID" value="NC_007759.1"/>
</dbReference>
<dbReference type="SMR" id="Q2LTI8"/>
<dbReference type="STRING" id="56780.SYN_01969"/>
<dbReference type="KEGG" id="sat:SYN_01969"/>
<dbReference type="eggNOG" id="COG0324">
    <property type="taxonomic scope" value="Bacteria"/>
</dbReference>
<dbReference type="HOGENOM" id="CLU_032616_0_1_7"/>
<dbReference type="InParanoid" id="Q2LTI8"/>
<dbReference type="OrthoDB" id="9776390at2"/>
<dbReference type="Proteomes" id="UP000001933">
    <property type="component" value="Chromosome"/>
</dbReference>
<dbReference type="GO" id="GO:0005524">
    <property type="term" value="F:ATP binding"/>
    <property type="evidence" value="ECO:0007669"/>
    <property type="project" value="UniProtKB-UniRule"/>
</dbReference>
<dbReference type="GO" id="GO:0052381">
    <property type="term" value="F:tRNA dimethylallyltransferase activity"/>
    <property type="evidence" value="ECO:0007669"/>
    <property type="project" value="UniProtKB-UniRule"/>
</dbReference>
<dbReference type="GO" id="GO:0006400">
    <property type="term" value="P:tRNA modification"/>
    <property type="evidence" value="ECO:0007669"/>
    <property type="project" value="TreeGrafter"/>
</dbReference>
<dbReference type="Gene3D" id="3.40.50.300">
    <property type="entry name" value="P-loop containing nucleotide triphosphate hydrolases"/>
    <property type="match status" value="1"/>
</dbReference>
<dbReference type="HAMAP" id="MF_00185">
    <property type="entry name" value="IPP_trans"/>
    <property type="match status" value="1"/>
</dbReference>
<dbReference type="InterPro" id="IPR039657">
    <property type="entry name" value="Dimethylallyltransferase"/>
</dbReference>
<dbReference type="InterPro" id="IPR018022">
    <property type="entry name" value="IPT"/>
</dbReference>
<dbReference type="InterPro" id="IPR027417">
    <property type="entry name" value="P-loop_NTPase"/>
</dbReference>
<dbReference type="NCBIfam" id="TIGR00174">
    <property type="entry name" value="miaA"/>
    <property type="match status" value="1"/>
</dbReference>
<dbReference type="PANTHER" id="PTHR11088">
    <property type="entry name" value="TRNA DIMETHYLALLYLTRANSFERASE"/>
    <property type="match status" value="1"/>
</dbReference>
<dbReference type="PANTHER" id="PTHR11088:SF60">
    <property type="entry name" value="TRNA DIMETHYLALLYLTRANSFERASE"/>
    <property type="match status" value="1"/>
</dbReference>
<dbReference type="Pfam" id="PF01715">
    <property type="entry name" value="IPPT"/>
    <property type="match status" value="1"/>
</dbReference>
<dbReference type="SUPFAM" id="SSF52540">
    <property type="entry name" value="P-loop containing nucleoside triphosphate hydrolases"/>
    <property type="match status" value="2"/>
</dbReference>
<keyword id="KW-0067">ATP-binding</keyword>
<keyword id="KW-0460">Magnesium</keyword>
<keyword id="KW-0547">Nucleotide-binding</keyword>
<keyword id="KW-1185">Reference proteome</keyword>
<keyword id="KW-0808">Transferase</keyword>
<keyword id="KW-0819">tRNA processing</keyword>
<feature type="chain" id="PRO_0000377351" description="tRNA dimethylallyltransferase 1">
    <location>
        <begin position="1"/>
        <end position="305"/>
    </location>
</feature>
<feature type="region of interest" description="Interaction with substrate tRNA" evidence="1">
    <location>
        <begin position="35"/>
        <end position="38"/>
    </location>
</feature>
<feature type="binding site" evidence="1">
    <location>
        <begin position="10"/>
        <end position="17"/>
    </location>
    <ligand>
        <name>ATP</name>
        <dbReference type="ChEBI" id="CHEBI:30616"/>
    </ligand>
</feature>
<feature type="binding site" evidence="1">
    <location>
        <begin position="12"/>
        <end position="17"/>
    </location>
    <ligand>
        <name>substrate</name>
    </ligand>
</feature>
<feature type="site" description="Interaction with substrate tRNA" evidence="1">
    <location>
        <position position="104"/>
    </location>
</feature>
<gene>
    <name evidence="1" type="primary">miaA1</name>
    <name type="ordered locus">SYNAS_15200</name>
    <name type="ORF">SYN_01969</name>
</gene>
<sequence length="305" mass="35757">MMKNLVVILGPTASGKTRLAVRLARDLKSEIVSADSRQVYRGMDIGTGKDLDEYRIDGEEIPCHLIDIVDPDYDFNVFEYQSRFYRCFEEILSRGIVPILVGGTGLYLSAVLENYRMVQVPENLDLRESLKAEPLERLQQILLEITPRIHNTTDLLDRGRLLRAIEIAQHSGRRGLRESPEHPRIEPLVFGVRWNRDLLRKRIALRLKERLSAGLIDEVKELHQSGISWDRLEFFGLEYRYVGLYLQSRMSYREMAEKLTIHICRFAKRQETWFRRMERHGIEIIWIEGDDYEALKEQLKGNLRS</sequence>
<comment type="function">
    <text evidence="1">Catalyzes the transfer of a dimethylallyl group onto the adenine at position 37 in tRNAs that read codons beginning with uridine, leading to the formation of N6-(dimethylallyl)adenosine (i(6)A).</text>
</comment>
<comment type="catalytic activity">
    <reaction evidence="1">
        <text>adenosine(37) in tRNA + dimethylallyl diphosphate = N(6)-dimethylallyladenosine(37) in tRNA + diphosphate</text>
        <dbReference type="Rhea" id="RHEA:26482"/>
        <dbReference type="Rhea" id="RHEA-COMP:10162"/>
        <dbReference type="Rhea" id="RHEA-COMP:10375"/>
        <dbReference type="ChEBI" id="CHEBI:33019"/>
        <dbReference type="ChEBI" id="CHEBI:57623"/>
        <dbReference type="ChEBI" id="CHEBI:74411"/>
        <dbReference type="ChEBI" id="CHEBI:74415"/>
        <dbReference type="EC" id="2.5.1.75"/>
    </reaction>
</comment>
<comment type="cofactor">
    <cofactor evidence="1">
        <name>Mg(2+)</name>
        <dbReference type="ChEBI" id="CHEBI:18420"/>
    </cofactor>
</comment>
<comment type="subunit">
    <text evidence="1">Monomer.</text>
</comment>
<comment type="similarity">
    <text evidence="1">Belongs to the IPP transferase family.</text>
</comment>
<evidence type="ECO:0000255" key="1">
    <source>
        <dbReference type="HAMAP-Rule" id="MF_00185"/>
    </source>
</evidence>
<protein>
    <recommendedName>
        <fullName evidence="1">tRNA dimethylallyltransferase 1</fullName>
        <ecNumber evidence="1">2.5.1.75</ecNumber>
    </recommendedName>
    <alternativeName>
        <fullName evidence="1">Dimethylallyl diphosphate:tRNA dimethylallyltransferase 1</fullName>
        <shortName evidence="1">DMAPP:tRNA dimethylallyltransferase 1</shortName>
        <shortName evidence="1">DMATase 1</shortName>
    </alternativeName>
    <alternativeName>
        <fullName evidence="1">Isopentenyl-diphosphate:tRNA isopentenyltransferase 1</fullName>
        <shortName evidence="1">IPP transferase 1</shortName>
        <shortName evidence="1">IPPT 1</shortName>
        <shortName evidence="1">IPTase 1</shortName>
    </alternativeName>
</protein>
<proteinExistence type="inferred from homology"/>